<evidence type="ECO:0000255" key="1">
    <source>
        <dbReference type="HAMAP-Rule" id="MF_00624"/>
    </source>
</evidence>
<accession>A1RLX5</accession>
<proteinExistence type="inferred from homology"/>
<feature type="chain" id="PRO_1000051586" description="Glucose-1-phosphate adenylyltransferase">
    <location>
        <begin position="1"/>
        <end position="420"/>
    </location>
</feature>
<feature type="binding site" evidence="1">
    <location>
        <position position="107"/>
    </location>
    <ligand>
        <name>alpha-D-glucose 1-phosphate</name>
        <dbReference type="ChEBI" id="CHEBI:58601"/>
    </ligand>
</feature>
<feature type="binding site" evidence="1">
    <location>
        <position position="173"/>
    </location>
    <ligand>
        <name>alpha-D-glucose 1-phosphate</name>
        <dbReference type="ChEBI" id="CHEBI:58601"/>
    </ligand>
</feature>
<feature type="binding site" evidence="1">
    <location>
        <begin position="188"/>
        <end position="189"/>
    </location>
    <ligand>
        <name>alpha-D-glucose 1-phosphate</name>
        <dbReference type="ChEBI" id="CHEBI:58601"/>
    </ligand>
</feature>
<feature type="binding site" evidence="1">
    <location>
        <position position="206"/>
    </location>
    <ligand>
        <name>alpha-D-glucose 1-phosphate</name>
        <dbReference type="ChEBI" id="CHEBI:58601"/>
    </ligand>
</feature>
<name>GLGC_SHESW</name>
<comment type="function">
    <text evidence="1">Involved in the biosynthesis of ADP-glucose, a building block required for the elongation reactions to produce glycogen. Catalyzes the reaction between ATP and alpha-D-glucose 1-phosphate (G1P) to produce pyrophosphate and ADP-Glc.</text>
</comment>
<comment type="catalytic activity">
    <reaction evidence="1">
        <text>alpha-D-glucose 1-phosphate + ATP + H(+) = ADP-alpha-D-glucose + diphosphate</text>
        <dbReference type="Rhea" id="RHEA:12120"/>
        <dbReference type="ChEBI" id="CHEBI:15378"/>
        <dbReference type="ChEBI" id="CHEBI:30616"/>
        <dbReference type="ChEBI" id="CHEBI:33019"/>
        <dbReference type="ChEBI" id="CHEBI:57498"/>
        <dbReference type="ChEBI" id="CHEBI:58601"/>
        <dbReference type="EC" id="2.7.7.27"/>
    </reaction>
</comment>
<comment type="pathway">
    <text evidence="1">Glycan biosynthesis; glycogen biosynthesis.</text>
</comment>
<comment type="subunit">
    <text evidence="1">Homotetramer.</text>
</comment>
<comment type="similarity">
    <text evidence="1">Belongs to the bacterial/plant glucose-1-phosphate adenylyltransferase family.</text>
</comment>
<reference key="1">
    <citation type="submission" date="2006-12" db="EMBL/GenBank/DDBJ databases">
        <title>Complete sequence of Shewanella sp. W3-18-1.</title>
        <authorList>
            <consortium name="US DOE Joint Genome Institute"/>
            <person name="Copeland A."/>
            <person name="Lucas S."/>
            <person name="Lapidus A."/>
            <person name="Barry K."/>
            <person name="Detter J.C."/>
            <person name="Glavina del Rio T."/>
            <person name="Hammon N."/>
            <person name="Israni S."/>
            <person name="Dalin E."/>
            <person name="Tice H."/>
            <person name="Pitluck S."/>
            <person name="Chain P."/>
            <person name="Malfatti S."/>
            <person name="Shin M."/>
            <person name="Vergez L."/>
            <person name="Schmutz J."/>
            <person name="Larimer F."/>
            <person name="Land M."/>
            <person name="Hauser L."/>
            <person name="Kyrpides N."/>
            <person name="Lykidis A."/>
            <person name="Tiedje J."/>
            <person name="Richardson P."/>
        </authorList>
    </citation>
    <scope>NUCLEOTIDE SEQUENCE [LARGE SCALE GENOMIC DNA]</scope>
    <source>
        <strain>W3-18-1</strain>
    </source>
</reference>
<sequence>MSNVRYISNLTRETYALILAGGRGSRLHELTDWRAKPALYFGGKFRIIDFPLSNCINSGVRRVGVVTQYKSHSLIRHVMRGWGHFKKELGESVEILPASQRFSENWYQGTADAVFQNIDIIRHELPKYVMVLSGDHVYRMDYAGILAAHAESGADMTVSCLEVPIAEAAGAFGVIEVDDNMRILGFEEKPQRPKPSPDNPEMCLASMGNYVFNTEFLFEQLKKDSQNATSDRDFGKDIIPSIIEKHNVFAYPFKSPFPNEQAYWRDVGTLDSFWQANMELLSPTPALNLYDAKWPIWTFQEQLPPAKFVFDDDDRRGMALDSIVSSGCIISGATVRRSVLFNEVRVCSYSVVEDSVVLPDVVVLRHCKIKNAIIDRGCIIPEGTVIGYNHDHDRAKGFRVSEKGVTLVTRDMLGLPVGYE</sequence>
<organism>
    <name type="scientific">Shewanella sp. (strain W3-18-1)</name>
    <dbReference type="NCBI Taxonomy" id="351745"/>
    <lineage>
        <taxon>Bacteria</taxon>
        <taxon>Pseudomonadati</taxon>
        <taxon>Pseudomonadota</taxon>
        <taxon>Gammaproteobacteria</taxon>
        <taxon>Alteromonadales</taxon>
        <taxon>Shewanellaceae</taxon>
        <taxon>Shewanella</taxon>
    </lineage>
</organism>
<gene>
    <name evidence="1" type="primary">glgC</name>
    <name type="ordered locus">Sputw3181_2853</name>
</gene>
<protein>
    <recommendedName>
        <fullName evidence="1">Glucose-1-phosphate adenylyltransferase</fullName>
        <ecNumber evidence="1">2.7.7.27</ecNumber>
    </recommendedName>
    <alternativeName>
        <fullName evidence="1">ADP-glucose pyrophosphorylase</fullName>
        <shortName evidence="1">ADPGlc PPase</shortName>
    </alternativeName>
    <alternativeName>
        <fullName evidence="1">ADP-glucose synthase</fullName>
    </alternativeName>
</protein>
<keyword id="KW-0067">ATP-binding</keyword>
<keyword id="KW-0119">Carbohydrate metabolism</keyword>
<keyword id="KW-0320">Glycogen biosynthesis</keyword>
<keyword id="KW-0321">Glycogen metabolism</keyword>
<keyword id="KW-0547">Nucleotide-binding</keyword>
<keyword id="KW-0548">Nucleotidyltransferase</keyword>
<keyword id="KW-0808">Transferase</keyword>
<dbReference type="EC" id="2.7.7.27" evidence="1"/>
<dbReference type="EMBL" id="CP000503">
    <property type="protein sequence ID" value="ABM25670.1"/>
    <property type="molecule type" value="Genomic_DNA"/>
</dbReference>
<dbReference type="RefSeq" id="WP_011790125.1">
    <property type="nucleotide sequence ID" value="NC_008750.1"/>
</dbReference>
<dbReference type="SMR" id="A1RLX5"/>
<dbReference type="GeneID" id="67442774"/>
<dbReference type="KEGG" id="shw:Sputw3181_2853"/>
<dbReference type="HOGENOM" id="CLU_029499_14_1_6"/>
<dbReference type="UniPathway" id="UPA00164"/>
<dbReference type="Proteomes" id="UP000002597">
    <property type="component" value="Chromosome"/>
</dbReference>
<dbReference type="GO" id="GO:0005524">
    <property type="term" value="F:ATP binding"/>
    <property type="evidence" value="ECO:0007669"/>
    <property type="project" value="UniProtKB-KW"/>
</dbReference>
<dbReference type="GO" id="GO:0008878">
    <property type="term" value="F:glucose-1-phosphate adenylyltransferase activity"/>
    <property type="evidence" value="ECO:0007669"/>
    <property type="project" value="UniProtKB-UniRule"/>
</dbReference>
<dbReference type="GO" id="GO:0005978">
    <property type="term" value="P:glycogen biosynthetic process"/>
    <property type="evidence" value="ECO:0007669"/>
    <property type="project" value="UniProtKB-UniRule"/>
</dbReference>
<dbReference type="CDD" id="cd02508">
    <property type="entry name" value="ADP_Glucose_PP"/>
    <property type="match status" value="1"/>
</dbReference>
<dbReference type="CDD" id="cd04651">
    <property type="entry name" value="LbH_G1P_AT_C"/>
    <property type="match status" value="1"/>
</dbReference>
<dbReference type="Gene3D" id="2.160.10.10">
    <property type="entry name" value="Hexapeptide repeat proteins"/>
    <property type="match status" value="1"/>
</dbReference>
<dbReference type="Gene3D" id="3.90.550.10">
    <property type="entry name" value="Spore Coat Polysaccharide Biosynthesis Protein SpsA, Chain A"/>
    <property type="match status" value="1"/>
</dbReference>
<dbReference type="HAMAP" id="MF_00624">
    <property type="entry name" value="GlgC"/>
    <property type="match status" value="1"/>
</dbReference>
<dbReference type="InterPro" id="IPR011831">
    <property type="entry name" value="ADP-Glc_PPase"/>
</dbReference>
<dbReference type="InterPro" id="IPR005836">
    <property type="entry name" value="ADP_Glu_pyroP_CS"/>
</dbReference>
<dbReference type="InterPro" id="IPR023049">
    <property type="entry name" value="GlgC_bac"/>
</dbReference>
<dbReference type="InterPro" id="IPR056818">
    <property type="entry name" value="GlmU/GlgC-like_hexapep"/>
</dbReference>
<dbReference type="InterPro" id="IPR005835">
    <property type="entry name" value="NTP_transferase_dom"/>
</dbReference>
<dbReference type="InterPro" id="IPR029044">
    <property type="entry name" value="Nucleotide-diphossugar_trans"/>
</dbReference>
<dbReference type="InterPro" id="IPR011004">
    <property type="entry name" value="Trimer_LpxA-like_sf"/>
</dbReference>
<dbReference type="NCBIfam" id="TIGR02091">
    <property type="entry name" value="glgC"/>
    <property type="match status" value="1"/>
</dbReference>
<dbReference type="NCBIfam" id="NF001947">
    <property type="entry name" value="PRK00725.1"/>
    <property type="match status" value="1"/>
</dbReference>
<dbReference type="NCBIfam" id="NF002023">
    <property type="entry name" value="PRK00844.1"/>
    <property type="match status" value="1"/>
</dbReference>
<dbReference type="PANTHER" id="PTHR43523:SF2">
    <property type="entry name" value="GLUCOSE-1-PHOSPHATE ADENYLYLTRANSFERASE"/>
    <property type="match status" value="1"/>
</dbReference>
<dbReference type="PANTHER" id="PTHR43523">
    <property type="entry name" value="GLUCOSE-1-PHOSPHATE ADENYLYLTRANSFERASE-RELATED"/>
    <property type="match status" value="1"/>
</dbReference>
<dbReference type="Pfam" id="PF24894">
    <property type="entry name" value="Hexapep_GlmU"/>
    <property type="match status" value="1"/>
</dbReference>
<dbReference type="Pfam" id="PF00483">
    <property type="entry name" value="NTP_transferase"/>
    <property type="match status" value="1"/>
</dbReference>
<dbReference type="SUPFAM" id="SSF53448">
    <property type="entry name" value="Nucleotide-diphospho-sugar transferases"/>
    <property type="match status" value="1"/>
</dbReference>
<dbReference type="SUPFAM" id="SSF51161">
    <property type="entry name" value="Trimeric LpxA-like enzymes"/>
    <property type="match status" value="1"/>
</dbReference>
<dbReference type="PROSITE" id="PS00808">
    <property type="entry name" value="ADP_GLC_PYROPHOSPH_1"/>
    <property type="match status" value="1"/>
</dbReference>
<dbReference type="PROSITE" id="PS00809">
    <property type="entry name" value="ADP_GLC_PYROPHOSPH_2"/>
    <property type="match status" value="1"/>
</dbReference>
<dbReference type="PROSITE" id="PS00810">
    <property type="entry name" value="ADP_GLC_PYROPHOSPH_3"/>
    <property type="match status" value="1"/>
</dbReference>